<comment type="function">
    <text evidence="1">Transcription factor involved in regulating gene activity following the primary growth factor response. Binds to the DNA sequence 5'-TGA[GC]TCA-3'. Heterodimerizes with proteins of the FOS family to form an AP-1 transcription complex, thereby enhancing its DNA binding activity to an AP-1 consensus sequence and its transcriptional activity (By similarity).</text>
</comment>
<comment type="subunit">
    <text evidence="1 4">Binds DNA as a homodimer or as a heterodimer with another member of the Jun/Fos family. Component of an AP-1 transcription factor complex composed of JUN-FOS heterodimers composed of JUN-FOS heterodimers (By similarity). As part of the AP-1 transcription factor complex, forms heterodimers with FOSB, thereby binding to the AP-1 consensus sequence and stimulating transcription (By similarity). Interacts with ITCH (via its WW domains).</text>
</comment>
<comment type="interaction">
    <interactant intactId="EBI-748062">
        <id>P17275</id>
    </interactant>
    <interactant intactId="EBI-1170906">
        <id>P15336</id>
        <label>ATF2</label>
    </interactant>
    <organismsDiffer>false</organismsDiffer>
    <experiments>6</experiments>
</comment>
<comment type="interaction">
    <interactant intactId="EBI-748062">
        <id>P17275</id>
    </interactant>
    <interactant intactId="EBI-712767">
        <id>P18847</id>
        <label>ATF3</label>
    </interactant>
    <organismsDiffer>false</organismsDiffer>
    <experiments>7</experiments>
</comment>
<comment type="interaction">
    <interactant intactId="EBI-748062">
        <id>P17275</id>
    </interactant>
    <interactant intactId="EBI-492498">
        <id>P18848</id>
        <label>ATF4</label>
    </interactant>
    <organismsDiffer>false</organismsDiffer>
    <experiments>3</experiments>
</comment>
<comment type="interaction">
    <interactant intactId="EBI-748062">
        <id>P17275</id>
    </interactant>
    <interactant intactId="EBI-765623">
        <id>P17544</id>
        <label>ATF7</label>
    </interactant>
    <organismsDiffer>false</organismsDiffer>
    <experiments>4</experiments>
</comment>
<comment type="interaction">
    <interactant intactId="EBI-748062">
        <id>P17275</id>
    </interactant>
    <interactant intactId="EBI-749503">
        <id>Q16520</id>
        <label>BATF</label>
    </interactant>
    <organismsDiffer>false</organismsDiffer>
    <experiments>45</experiments>
</comment>
<comment type="interaction">
    <interactant intactId="EBI-748062">
        <id>P17275</id>
    </interactant>
    <interactant intactId="EBI-742695">
        <id>Q8N1L9</id>
        <label>BATF2</label>
    </interactant>
    <organismsDiffer>false</organismsDiffer>
    <experiments>5</experiments>
</comment>
<comment type="interaction">
    <interactant intactId="EBI-748062">
        <id>P17275</id>
    </interactant>
    <interactant intactId="EBI-10312707">
        <id>Q9NR55</id>
        <label>BATF3</label>
    </interactant>
    <organismsDiffer>false</organismsDiffer>
    <experiments>9</experiments>
</comment>
<comment type="interaction">
    <interactant intactId="EBI-748062">
        <id>P17275</id>
    </interactant>
    <interactant intactId="EBI-25837549">
        <id>P28329-3</id>
        <label>CHAT</label>
    </interactant>
    <organismsDiffer>false</organismsDiffer>
    <experiments>3</experiments>
</comment>
<comment type="interaction">
    <interactant intactId="EBI-748062">
        <id>P17275</id>
    </interactant>
    <interactant intactId="EBI-742651">
        <id>P35638</id>
        <label>DDIT3</label>
    </interactant>
    <organismsDiffer>false</organismsDiffer>
    <experiments>2</experiments>
</comment>
<comment type="interaction">
    <interactant intactId="EBI-748062">
        <id>P17275</id>
    </interactant>
    <interactant intactId="EBI-348399">
        <id>P22607</id>
        <label>FGFR3</label>
    </interactant>
    <organismsDiffer>false</organismsDiffer>
    <experiments>3</experiments>
</comment>
<comment type="interaction">
    <interactant intactId="EBI-748062">
        <id>P17275</id>
    </interactant>
    <interactant intactId="EBI-852851">
        <id>P01100</id>
        <label>FOS</label>
    </interactant>
    <organismsDiffer>false</organismsDiffer>
    <experiments>14</experiments>
</comment>
<comment type="interaction">
    <interactant intactId="EBI-748062">
        <id>P17275</id>
    </interactant>
    <interactant intactId="EBI-10198738">
        <id>Q6FG41</id>
        <label>FOS</label>
    </interactant>
    <organismsDiffer>false</organismsDiffer>
    <experiments>4</experiments>
</comment>
<comment type="interaction">
    <interactant intactId="EBI-748062">
        <id>P17275</id>
    </interactant>
    <interactant intactId="EBI-2806743">
        <id>P53539</id>
        <label>FOSB</label>
    </interactant>
    <organismsDiffer>false</organismsDiffer>
    <experiments>8</experiments>
</comment>
<comment type="interaction">
    <interactant intactId="EBI-748062">
        <id>P17275</id>
    </interactant>
    <interactant intactId="EBI-744510">
        <id>P15407</id>
        <label>FOSL1</label>
    </interactant>
    <organismsDiffer>false</organismsDiffer>
    <experiments>11</experiments>
</comment>
<comment type="interaction">
    <interactant intactId="EBI-748062">
        <id>P17275</id>
    </interactant>
    <interactant intactId="EBI-3893419">
        <id>P15408</id>
        <label>FOSL2</label>
    </interactant>
    <organismsDiffer>false</organismsDiffer>
    <experiments>10</experiments>
</comment>
<comment type="interaction">
    <interactant intactId="EBI-748062">
        <id>P17275</id>
    </interactant>
    <interactant intactId="EBI-1248415">
        <id>Q8WYK2</id>
        <label>JDP2</label>
    </interactant>
    <organismsDiffer>false</organismsDiffer>
    <experiments>3</experiments>
</comment>
<comment type="interaction">
    <interactant intactId="EBI-748062">
        <id>P17275</id>
    </interactant>
    <interactant intactId="EBI-749995">
        <id>P56279</id>
        <label>TCL1A</label>
    </interactant>
    <organismsDiffer>false</organismsDiffer>
    <experiments>2</experiments>
</comment>
<comment type="interaction">
    <interactant intactId="EBI-748062">
        <id>P17275</id>
    </interactant>
    <interactant intactId="EBI-2682158">
        <id>Q86XI8</id>
        <label>ZSWIM9</label>
    </interactant>
    <organismsDiffer>false</organismsDiffer>
    <experiments>2</experiments>
</comment>
<comment type="interaction">
    <interactant intactId="EBI-748062">
        <id>P17275</id>
    </interactant>
    <interactant intactId="EBI-10890294">
        <id>P0C746</id>
        <label>HBZ</label>
    </interactant>
    <organismsDiffer>true</organismsDiffer>
    <experiments>2</experiments>
</comment>
<comment type="interaction">
    <interactant intactId="EBI-748062">
        <id>P17275</id>
    </interactant>
    <interactant intactId="EBI-10889526">
        <id>Q9DGW5</id>
        <label>MDV005</label>
    </interactant>
    <organismsDiffer>true</organismsDiffer>
    <experiments>2</experiments>
</comment>
<comment type="subcellular location">
    <subcellularLocation>
        <location>Nucleus</location>
    </subcellularLocation>
</comment>
<comment type="induction">
    <text>By growth factors.</text>
</comment>
<comment type="PTM">
    <text evidence="4">Ubiquitinated by ITCH, leading to its degradation.</text>
</comment>
<comment type="similarity">
    <text evidence="6">Belongs to the bZIP family. Jun subfamily.</text>
</comment>
<comment type="online information" name="Atlas of Genetics and Cytogenetics in Oncology and Haematology">
    <link uri="https://atlasgeneticsoncology.org/gene/178/JUNB"/>
</comment>
<keyword id="KW-0007">Acetylation</keyword>
<keyword id="KW-0238">DNA-binding</keyword>
<keyword id="KW-1017">Isopeptide bond</keyword>
<keyword id="KW-0539">Nucleus</keyword>
<keyword id="KW-0597">Phosphoprotein</keyword>
<keyword id="KW-1267">Proteomics identification</keyword>
<keyword id="KW-1185">Reference proteome</keyword>
<keyword id="KW-0804">Transcription</keyword>
<keyword id="KW-0805">Transcription regulation</keyword>
<keyword id="KW-0832">Ubl conjugation</keyword>
<organism>
    <name type="scientific">Homo sapiens</name>
    <name type="common">Human</name>
    <dbReference type="NCBI Taxonomy" id="9606"/>
    <lineage>
        <taxon>Eukaryota</taxon>
        <taxon>Metazoa</taxon>
        <taxon>Chordata</taxon>
        <taxon>Craniata</taxon>
        <taxon>Vertebrata</taxon>
        <taxon>Euteleostomi</taxon>
        <taxon>Mammalia</taxon>
        <taxon>Eutheria</taxon>
        <taxon>Euarchontoglires</taxon>
        <taxon>Primates</taxon>
        <taxon>Haplorrhini</taxon>
        <taxon>Catarrhini</taxon>
        <taxon>Hominidae</taxon>
        <taxon>Homo</taxon>
    </lineage>
</organism>
<name>JUNB_HUMAN</name>
<proteinExistence type="evidence at protein level"/>
<dbReference type="EMBL" id="M29039">
    <property type="protein sequence ID" value="AAA59198.1"/>
    <property type="molecule type" value="Genomic_DNA"/>
</dbReference>
<dbReference type="EMBL" id="X51345">
    <property type="protein sequence ID" value="CAA35738.1"/>
    <property type="molecule type" value="mRNA"/>
</dbReference>
<dbReference type="EMBL" id="U20734">
    <property type="protein sequence ID" value="AAA74915.1"/>
    <property type="molecule type" value="Genomic_DNA"/>
</dbReference>
<dbReference type="EMBL" id="AY751746">
    <property type="protein sequence ID" value="AAU43800.1"/>
    <property type="molecule type" value="Genomic_DNA"/>
</dbReference>
<dbReference type="EMBL" id="BC004250">
    <property type="protein sequence ID" value="AAH04250.1"/>
    <property type="molecule type" value="mRNA"/>
</dbReference>
<dbReference type="EMBL" id="BC009465">
    <property type="protein sequence ID" value="AAH09465.1"/>
    <property type="molecule type" value="mRNA"/>
</dbReference>
<dbReference type="EMBL" id="BC009466">
    <property type="protein sequence ID" value="AAH09466.1"/>
    <property type="molecule type" value="mRNA"/>
</dbReference>
<dbReference type="CCDS" id="CCDS12280.1"/>
<dbReference type="PIR" id="S10183">
    <property type="entry name" value="TVHUJB"/>
</dbReference>
<dbReference type="RefSeq" id="NP_002220.1">
    <property type="nucleotide sequence ID" value="NM_002229.3"/>
</dbReference>
<dbReference type="SMR" id="P17275"/>
<dbReference type="BioGRID" id="109929">
    <property type="interactions" value="129"/>
</dbReference>
<dbReference type="ComplexPortal" id="CPX-6421">
    <property type="entry name" value="bZIP transcription factor complex, ATF2-JUNB"/>
</dbReference>
<dbReference type="ComplexPortal" id="CPX-6476">
    <property type="entry name" value="bZIP transcription factor complex, ATF3-JUNB"/>
</dbReference>
<dbReference type="ComplexPortal" id="CPX-6563">
    <property type="entry name" value="bZIP transcription factor complex, ATF4-JUNB"/>
</dbReference>
<dbReference type="ComplexPortal" id="CPX-6787">
    <property type="entry name" value="bZIP transcription factor complex, ATF7-JUNB"/>
</dbReference>
<dbReference type="ComplexPortal" id="CPX-7003">
    <property type="entry name" value="bZIP transcription factor complex, BATF-JUNB"/>
</dbReference>
<dbReference type="ComplexPortal" id="CPX-7061">
    <property type="entry name" value="bZIP transcription factor complex, BATF2-JUNB"/>
</dbReference>
<dbReference type="ComplexPortal" id="CPX-7101">
    <property type="entry name" value="bZIP transcription factor complex, BATF3-JUNB"/>
</dbReference>
<dbReference type="DIP" id="DIP-1052N"/>
<dbReference type="FunCoup" id="P17275">
    <property type="interactions" value="908"/>
</dbReference>
<dbReference type="IntAct" id="P17275">
    <property type="interactions" value="86"/>
</dbReference>
<dbReference type="MINT" id="P17275"/>
<dbReference type="STRING" id="9606.ENSP00000303315"/>
<dbReference type="GlyCosmos" id="P17275">
    <property type="glycosylation" value="21 sites, 2 glycans"/>
</dbReference>
<dbReference type="GlyGen" id="P17275">
    <property type="glycosylation" value="23 sites, 2 O-linked glycans (22 sites)"/>
</dbReference>
<dbReference type="iPTMnet" id="P17275"/>
<dbReference type="PhosphoSitePlus" id="P17275"/>
<dbReference type="BioMuta" id="JUNB"/>
<dbReference type="DMDM" id="135304"/>
<dbReference type="jPOST" id="P17275"/>
<dbReference type="MassIVE" id="P17275"/>
<dbReference type="PaxDb" id="9606-ENSP00000303315"/>
<dbReference type="PeptideAtlas" id="P17275"/>
<dbReference type="ProteomicsDB" id="53465"/>
<dbReference type="Pumba" id="P17275"/>
<dbReference type="Antibodypedia" id="3847">
    <property type="antibodies" value="922 antibodies from 44 providers"/>
</dbReference>
<dbReference type="DNASU" id="3726"/>
<dbReference type="Ensembl" id="ENST00000302754.6">
    <property type="protein sequence ID" value="ENSP00000303315.4"/>
    <property type="gene ID" value="ENSG00000171223.6"/>
</dbReference>
<dbReference type="GeneID" id="3726"/>
<dbReference type="KEGG" id="hsa:3726"/>
<dbReference type="MANE-Select" id="ENST00000302754.6">
    <property type="protein sequence ID" value="ENSP00000303315.4"/>
    <property type="RefSeq nucleotide sequence ID" value="NM_002229.3"/>
    <property type="RefSeq protein sequence ID" value="NP_002220.1"/>
</dbReference>
<dbReference type="AGR" id="HGNC:6205"/>
<dbReference type="CTD" id="3726"/>
<dbReference type="DisGeNET" id="3726"/>
<dbReference type="GeneCards" id="JUNB"/>
<dbReference type="HGNC" id="HGNC:6205">
    <property type="gene designation" value="JUNB"/>
</dbReference>
<dbReference type="HPA" id="ENSG00000171223">
    <property type="expression patterns" value="Low tissue specificity"/>
</dbReference>
<dbReference type="MIM" id="165161">
    <property type="type" value="gene"/>
</dbReference>
<dbReference type="neXtProt" id="NX_P17275"/>
<dbReference type="OpenTargets" id="ENSG00000171223"/>
<dbReference type="PharmGKB" id="PA30007"/>
<dbReference type="VEuPathDB" id="HostDB:ENSG00000171223"/>
<dbReference type="eggNOG" id="KOG0837">
    <property type="taxonomic scope" value="Eukaryota"/>
</dbReference>
<dbReference type="GeneTree" id="ENSGT00940000161195"/>
<dbReference type="HOGENOM" id="CLU_057007_0_0_1"/>
<dbReference type="InParanoid" id="P17275"/>
<dbReference type="OMA" id="FAHSMQT"/>
<dbReference type="OrthoDB" id="2187714at2759"/>
<dbReference type="PAN-GO" id="P17275">
    <property type="GO annotations" value="7 GO annotations based on evolutionary models"/>
</dbReference>
<dbReference type="PhylomeDB" id="P17275"/>
<dbReference type="PathwayCommons" id="P17275"/>
<dbReference type="Reactome" id="R-HSA-2173796">
    <property type="pathway name" value="SMAD2/SMAD3:SMAD4 heterotrimer regulates transcription"/>
</dbReference>
<dbReference type="Reactome" id="R-HSA-6785807">
    <property type="pathway name" value="Interleukin-4 and Interleukin-13 signaling"/>
</dbReference>
<dbReference type="Reactome" id="R-HSA-9031628">
    <property type="pathway name" value="NGF-stimulated transcription"/>
</dbReference>
<dbReference type="Reactome" id="R-HSA-9725371">
    <property type="pathway name" value="Nuclear events stimulated by ALK signaling in cancer"/>
</dbReference>
<dbReference type="SignaLink" id="P17275"/>
<dbReference type="SIGNOR" id="P17275"/>
<dbReference type="BioGRID-ORCS" id="3726">
    <property type="hits" value="125 hits in 1188 CRISPR screens"/>
</dbReference>
<dbReference type="ChiTaRS" id="JUNB">
    <property type="organism name" value="human"/>
</dbReference>
<dbReference type="GeneWiki" id="JUNB"/>
<dbReference type="GenomeRNAi" id="3726"/>
<dbReference type="Pharos" id="P17275">
    <property type="development level" value="Tbio"/>
</dbReference>
<dbReference type="PRO" id="PR:P17275"/>
<dbReference type="Proteomes" id="UP000005640">
    <property type="component" value="Chromosome 19"/>
</dbReference>
<dbReference type="RNAct" id="P17275">
    <property type="molecule type" value="protein"/>
</dbReference>
<dbReference type="Bgee" id="ENSG00000171223">
    <property type="expression patterns" value="Expressed in mucosa of stomach and 201 other cell types or tissues"/>
</dbReference>
<dbReference type="ExpressionAtlas" id="P17275">
    <property type="expression patterns" value="baseline and differential"/>
</dbReference>
<dbReference type="GO" id="GO:0000785">
    <property type="term" value="C:chromatin"/>
    <property type="evidence" value="ECO:0000247"/>
    <property type="project" value="NTNU_SB"/>
</dbReference>
<dbReference type="GO" id="GO:0005654">
    <property type="term" value="C:nucleoplasm"/>
    <property type="evidence" value="ECO:0000314"/>
    <property type="project" value="HPA"/>
</dbReference>
<dbReference type="GO" id="GO:0005634">
    <property type="term" value="C:nucleus"/>
    <property type="evidence" value="ECO:0000303"/>
    <property type="project" value="ComplexPortal"/>
</dbReference>
<dbReference type="GO" id="GO:0090575">
    <property type="term" value="C:RNA polymerase II transcription regulator complex"/>
    <property type="evidence" value="ECO:0000353"/>
    <property type="project" value="ComplexPortal"/>
</dbReference>
<dbReference type="GO" id="GO:0035976">
    <property type="term" value="C:transcription factor AP-1 complex"/>
    <property type="evidence" value="ECO:0000314"/>
    <property type="project" value="CAFA"/>
</dbReference>
<dbReference type="GO" id="GO:0005667">
    <property type="term" value="C:transcription regulator complex"/>
    <property type="evidence" value="ECO:0000318"/>
    <property type="project" value="GO_Central"/>
</dbReference>
<dbReference type="GO" id="GO:0003677">
    <property type="term" value="F:DNA binding"/>
    <property type="evidence" value="ECO:0000304"/>
    <property type="project" value="ProtInc"/>
</dbReference>
<dbReference type="GO" id="GO:0001228">
    <property type="term" value="F:DNA-binding transcription activator activity, RNA polymerase II-specific"/>
    <property type="evidence" value="ECO:0007669"/>
    <property type="project" value="Ensembl"/>
</dbReference>
<dbReference type="GO" id="GO:0000981">
    <property type="term" value="F:DNA-binding transcription factor activity, RNA polymerase II-specific"/>
    <property type="evidence" value="ECO:0000247"/>
    <property type="project" value="NTNU_SB"/>
</dbReference>
<dbReference type="GO" id="GO:0000978">
    <property type="term" value="F:RNA polymerase II cis-regulatory region sequence-specific DNA binding"/>
    <property type="evidence" value="ECO:0000318"/>
    <property type="project" value="GO_Central"/>
</dbReference>
<dbReference type="GO" id="GO:1990837">
    <property type="term" value="F:sequence-specific double-stranded DNA binding"/>
    <property type="evidence" value="ECO:0000314"/>
    <property type="project" value="ARUK-UCL"/>
</dbReference>
<dbReference type="GO" id="GO:0071277">
    <property type="term" value="P:cellular response to calcium ion"/>
    <property type="evidence" value="ECO:0007669"/>
    <property type="project" value="Ensembl"/>
</dbReference>
<dbReference type="GO" id="GO:0046697">
    <property type="term" value="P:decidualization"/>
    <property type="evidence" value="ECO:0007669"/>
    <property type="project" value="Ensembl"/>
</dbReference>
<dbReference type="GO" id="GO:0060136">
    <property type="term" value="P:embryonic process involved in female pregnancy"/>
    <property type="evidence" value="ECO:0007669"/>
    <property type="project" value="Ensembl"/>
</dbReference>
<dbReference type="GO" id="GO:0140467">
    <property type="term" value="P:integrated stress response signaling"/>
    <property type="evidence" value="ECO:0000303"/>
    <property type="project" value="ComplexPortal"/>
</dbReference>
<dbReference type="GO" id="GO:0060716">
    <property type="term" value="P:labyrinthine layer blood vessel development"/>
    <property type="evidence" value="ECO:0007669"/>
    <property type="project" value="Ensembl"/>
</dbReference>
<dbReference type="GO" id="GO:0001649">
    <property type="term" value="P:osteoblast differentiation"/>
    <property type="evidence" value="ECO:0007669"/>
    <property type="project" value="Ensembl"/>
</dbReference>
<dbReference type="GO" id="GO:0033687">
    <property type="term" value="P:osteoblast proliferation"/>
    <property type="evidence" value="ECO:0007669"/>
    <property type="project" value="Ensembl"/>
</dbReference>
<dbReference type="GO" id="GO:0030316">
    <property type="term" value="P:osteoclast differentiation"/>
    <property type="evidence" value="ECO:0007669"/>
    <property type="project" value="Ensembl"/>
</dbReference>
<dbReference type="GO" id="GO:0002158">
    <property type="term" value="P:osteoclast proliferation"/>
    <property type="evidence" value="ECO:0007669"/>
    <property type="project" value="Ensembl"/>
</dbReference>
<dbReference type="GO" id="GO:0045597">
    <property type="term" value="P:positive regulation of cell differentiation"/>
    <property type="evidence" value="ECO:0007669"/>
    <property type="project" value="Ensembl"/>
</dbReference>
<dbReference type="GO" id="GO:0045944">
    <property type="term" value="P:positive regulation of transcription by RNA polymerase II"/>
    <property type="evidence" value="ECO:0000314"/>
    <property type="project" value="CAFA"/>
</dbReference>
<dbReference type="GO" id="GO:0051726">
    <property type="term" value="P:regulation of cell cycle"/>
    <property type="evidence" value="ECO:0000318"/>
    <property type="project" value="GO_Central"/>
</dbReference>
<dbReference type="GO" id="GO:0042127">
    <property type="term" value="P:regulation of cell population proliferation"/>
    <property type="evidence" value="ECO:0000318"/>
    <property type="project" value="GO_Central"/>
</dbReference>
<dbReference type="GO" id="GO:2000319">
    <property type="term" value="P:regulation of T-helper 17 cell differentiation"/>
    <property type="evidence" value="ECO:0000303"/>
    <property type="project" value="ComplexPortal"/>
</dbReference>
<dbReference type="GO" id="GO:0006357">
    <property type="term" value="P:regulation of transcription by RNA polymerase II"/>
    <property type="evidence" value="ECO:0000304"/>
    <property type="project" value="ProtInc"/>
</dbReference>
<dbReference type="GO" id="GO:0048545">
    <property type="term" value="P:response to steroid hormone"/>
    <property type="evidence" value="ECO:0000318"/>
    <property type="project" value="GO_Central"/>
</dbReference>
<dbReference type="GO" id="GO:0001829">
    <property type="term" value="P:trophectodermal cell differentiation"/>
    <property type="evidence" value="ECO:0007669"/>
    <property type="project" value="Ensembl"/>
</dbReference>
<dbReference type="GO" id="GO:0001570">
    <property type="term" value="P:vasculogenesis"/>
    <property type="evidence" value="ECO:0007669"/>
    <property type="project" value="Ensembl"/>
</dbReference>
<dbReference type="CDD" id="cd14696">
    <property type="entry name" value="bZIP_Jun"/>
    <property type="match status" value="1"/>
</dbReference>
<dbReference type="FunFam" id="1.20.5.170:FF:000012">
    <property type="entry name" value="Putative transcription factor AP-1"/>
    <property type="match status" value="1"/>
</dbReference>
<dbReference type="Gene3D" id="1.20.5.170">
    <property type="match status" value="1"/>
</dbReference>
<dbReference type="InterPro" id="IPR050946">
    <property type="entry name" value="AP-1_TF_bZIP"/>
</dbReference>
<dbReference type="InterPro" id="IPR004827">
    <property type="entry name" value="bZIP"/>
</dbReference>
<dbReference type="InterPro" id="IPR046347">
    <property type="entry name" value="bZIP_sf"/>
</dbReference>
<dbReference type="InterPro" id="IPR005643">
    <property type="entry name" value="JNK"/>
</dbReference>
<dbReference type="InterPro" id="IPR002112">
    <property type="entry name" value="Leuzip_Jun"/>
</dbReference>
<dbReference type="InterPro" id="IPR008917">
    <property type="entry name" value="TF_DNA-bd_sf"/>
</dbReference>
<dbReference type="PANTHER" id="PTHR11462">
    <property type="entry name" value="JUN TRANSCRIPTION FACTOR-RELATED"/>
    <property type="match status" value="1"/>
</dbReference>
<dbReference type="PANTHER" id="PTHR11462:SF37">
    <property type="entry name" value="TRANSCRIPTION FACTOR JUNB"/>
    <property type="match status" value="1"/>
</dbReference>
<dbReference type="Pfam" id="PF00170">
    <property type="entry name" value="bZIP_1"/>
    <property type="match status" value="1"/>
</dbReference>
<dbReference type="Pfam" id="PF03957">
    <property type="entry name" value="Jun"/>
    <property type="match status" value="1"/>
</dbReference>
<dbReference type="PRINTS" id="PR00043">
    <property type="entry name" value="LEUZIPPRJUN"/>
</dbReference>
<dbReference type="SMART" id="SM00338">
    <property type="entry name" value="BRLZ"/>
    <property type="match status" value="1"/>
</dbReference>
<dbReference type="SUPFAM" id="SSF47454">
    <property type="entry name" value="A DNA-binding domain in eukaryotic transcription factors"/>
    <property type="match status" value="1"/>
</dbReference>
<dbReference type="SUPFAM" id="SSF57959">
    <property type="entry name" value="Leucine zipper domain"/>
    <property type="match status" value="1"/>
</dbReference>
<dbReference type="PROSITE" id="PS50217">
    <property type="entry name" value="BZIP"/>
    <property type="match status" value="1"/>
</dbReference>
<dbReference type="PROSITE" id="PS00036">
    <property type="entry name" value="BZIP_BASIC"/>
    <property type="match status" value="1"/>
</dbReference>
<gene>
    <name type="primary">JUNB</name>
</gene>
<reference key="1">
    <citation type="journal article" date="1989" name="Cell">
        <title>jun-B inhibits and c-fos stimulates the transforming and trans-activating activities of c-jun.</title>
        <authorList>
            <person name="Schuette J."/>
            <person name="Viallet J."/>
            <person name="Nau M."/>
            <person name="Segal S."/>
            <person name="Fedorko J."/>
            <person name="Minna J."/>
        </authorList>
    </citation>
    <scope>NUCLEOTIDE SEQUENCE [GENOMIC DNA]</scope>
</reference>
<reference key="2">
    <citation type="journal article" date="1990" name="Nucleic Acids Res.">
        <title>Isolation of human cDNA clones of jun-related genes, jun-B and jun-D.</title>
        <authorList>
            <person name="Nomura N."/>
            <person name="Ide M."/>
            <person name="Sasamoto S."/>
            <person name="Matsui M."/>
            <person name="Date T."/>
            <person name="Ishizaki R."/>
        </authorList>
    </citation>
    <scope>NUCLEOTIDE SEQUENCE [MRNA]</scope>
</reference>
<reference key="3">
    <citation type="journal article" date="1995" name="Genomics">
        <title>Complex genetic organization of junB: multiple blocks of flanking evolutionarily conserved sequence at the murine and human junB loci.</title>
        <authorList>
            <person name="Phinney D.G."/>
            <person name="Tseng S.W."/>
            <person name="Ryder K."/>
        </authorList>
    </citation>
    <scope>NUCLEOTIDE SEQUENCE [GENOMIC DNA]</scope>
    <source>
        <tissue>Placenta</tissue>
    </source>
</reference>
<reference key="4">
    <citation type="submission" date="2004-09" db="EMBL/GenBank/DDBJ databases">
        <authorList>
            <consortium name="NIEHS SNPs program"/>
        </authorList>
    </citation>
    <scope>NUCLEOTIDE SEQUENCE [GENOMIC DNA]</scope>
    <scope>VARIANT VAL-230</scope>
</reference>
<reference key="5">
    <citation type="journal article" date="2004" name="Genome Res.">
        <title>The status, quality, and expansion of the NIH full-length cDNA project: the Mammalian Gene Collection (MGC).</title>
        <authorList>
            <consortium name="The MGC Project Team"/>
        </authorList>
    </citation>
    <scope>NUCLEOTIDE SEQUENCE [LARGE SCALE MRNA]</scope>
    <source>
        <tissue>Pancreas</tissue>
    </source>
</reference>
<reference key="6">
    <citation type="journal article" date="2006" name="Mol. Cell">
        <title>Negative regulation of the E3 ubiquitin ligase itch via Fyn-mediated tyrosine phosphorylation.</title>
        <authorList>
            <person name="Yang C."/>
            <person name="Zhou W."/>
            <person name="Jeon M.S."/>
            <person name="Demydenko D."/>
            <person name="Harada Y."/>
            <person name="Zhou H."/>
            <person name="Liu Y.C."/>
        </authorList>
    </citation>
    <scope>INTERACTION WITH ITCH</scope>
    <scope>UBIQUITINATION</scope>
</reference>
<reference key="7">
    <citation type="journal article" date="2008" name="Proc. Natl. Acad. Sci. U.S.A.">
        <title>A quantitative atlas of mitotic phosphorylation.</title>
        <authorList>
            <person name="Dephoure N."/>
            <person name="Zhou C."/>
            <person name="Villen J."/>
            <person name="Beausoleil S.A."/>
            <person name="Bakalarski C.E."/>
            <person name="Elledge S.J."/>
            <person name="Gygi S.P."/>
        </authorList>
    </citation>
    <scope>PHOSPHORYLATION [LARGE SCALE ANALYSIS] AT THR-102; THR-104 AND SER-117</scope>
    <scope>IDENTIFICATION BY MASS SPECTROMETRY [LARGE SCALE ANALYSIS]</scope>
    <source>
        <tissue>Cervix carcinoma</tissue>
    </source>
</reference>
<reference key="8">
    <citation type="journal article" date="2009" name="Sci. Signal.">
        <title>Quantitative phosphoproteomic analysis of T cell receptor signaling reveals system-wide modulation of protein-protein interactions.</title>
        <authorList>
            <person name="Mayya V."/>
            <person name="Lundgren D.H."/>
            <person name="Hwang S.-I."/>
            <person name="Rezaul K."/>
            <person name="Wu L."/>
            <person name="Eng J.K."/>
            <person name="Rodionov V."/>
            <person name="Han D.K."/>
        </authorList>
    </citation>
    <scope>PHOSPHORYLATION [LARGE SCALE ANALYSIS] AT SER-251; THR-255 AND SER-259</scope>
    <scope>IDENTIFICATION BY MASS SPECTROMETRY [LARGE SCALE ANALYSIS]</scope>
    <source>
        <tissue>Leukemic T-cell</tissue>
    </source>
</reference>
<reference key="9">
    <citation type="journal article" date="2010" name="Sci. Signal.">
        <title>Quantitative phosphoproteomics reveals widespread full phosphorylation site occupancy during mitosis.</title>
        <authorList>
            <person name="Olsen J.V."/>
            <person name="Vermeulen M."/>
            <person name="Santamaria A."/>
            <person name="Kumar C."/>
            <person name="Miller M.L."/>
            <person name="Jensen L.J."/>
            <person name="Gnad F."/>
            <person name="Cox J."/>
            <person name="Jensen T.S."/>
            <person name="Nigg E.A."/>
            <person name="Brunak S."/>
            <person name="Mann M."/>
        </authorList>
    </citation>
    <scope>PHOSPHORYLATION [LARGE SCALE ANALYSIS] AT THR-104; SER-117; SER-251 AND THR-255</scope>
    <scope>IDENTIFICATION BY MASS SPECTROMETRY [LARGE SCALE ANALYSIS]</scope>
    <source>
        <tissue>Cervix carcinoma</tissue>
    </source>
</reference>
<reference key="10">
    <citation type="journal article" date="2011" name="Sci. Signal.">
        <title>System-wide temporal characterization of the proteome and phosphoproteome of human embryonic stem cell differentiation.</title>
        <authorList>
            <person name="Rigbolt K.T."/>
            <person name="Prokhorova T.A."/>
            <person name="Akimov V."/>
            <person name="Henningsen J."/>
            <person name="Johansen P.T."/>
            <person name="Kratchmarova I."/>
            <person name="Kassem M."/>
            <person name="Mann M."/>
            <person name="Olsen J.V."/>
            <person name="Blagoev B."/>
        </authorList>
    </citation>
    <scope>PHOSPHORYLATION [LARGE SCALE ANALYSIS] AT THR-255 AND SER-259</scope>
    <scope>IDENTIFICATION BY MASS SPECTROMETRY [LARGE SCALE ANALYSIS]</scope>
</reference>
<reference key="11">
    <citation type="journal article" date="2013" name="J. Proteome Res.">
        <title>Toward a comprehensive characterization of a human cancer cell phosphoproteome.</title>
        <authorList>
            <person name="Zhou H."/>
            <person name="Di Palma S."/>
            <person name="Preisinger C."/>
            <person name="Peng M."/>
            <person name="Polat A.N."/>
            <person name="Heck A.J."/>
            <person name="Mohammed S."/>
        </authorList>
    </citation>
    <scope>PHOSPHORYLATION [LARGE SCALE ANALYSIS] AT SER-117; THR-255 AND SER-259</scope>
    <scope>IDENTIFICATION BY MASS SPECTROMETRY [LARGE SCALE ANALYSIS]</scope>
    <source>
        <tissue>Cervix carcinoma</tissue>
        <tissue>Erythroleukemia</tissue>
    </source>
</reference>
<reference key="12">
    <citation type="journal article" date="2014" name="Nat. Struct. Mol. Biol.">
        <title>Uncovering global SUMOylation signaling networks in a site-specific manner.</title>
        <authorList>
            <person name="Hendriks I.A."/>
            <person name="D'Souza R.C."/>
            <person name="Yang B."/>
            <person name="Verlaan-de Vries M."/>
            <person name="Mann M."/>
            <person name="Vertegaal A.C."/>
        </authorList>
    </citation>
    <scope>SUMOYLATION [LARGE SCALE ANALYSIS] AT LYS-4; LYS-33 AND LYS-240</scope>
    <scope>IDENTIFICATION BY MASS SPECTROMETRY [LARGE SCALE ANALYSIS]</scope>
</reference>
<reference key="13">
    <citation type="journal article" date="2014" name="Proc. Natl. Acad. Sci. U.S.A.">
        <title>Mapping of SUMO sites and analysis of SUMOylation changes induced by external stimuli.</title>
        <authorList>
            <person name="Impens F."/>
            <person name="Radoshevich L."/>
            <person name="Cossart P."/>
            <person name="Ribet D."/>
        </authorList>
    </citation>
    <scope>SUMOYLATION [LARGE SCALE ANALYSIS] AT LYS-240</scope>
    <scope>IDENTIFICATION BY MASS SPECTROMETRY [LARGE SCALE ANALYSIS]</scope>
</reference>
<reference key="14">
    <citation type="journal article" date="2015" name="Cell Rep.">
        <title>SUMO-2 orchestrates chromatin modifiers in response to DNA damage.</title>
        <authorList>
            <person name="Hendriks I.A."/>
            <person name="Treffers L.W."/>
            <person name="Verlaan-de Vries M."/>
            <person name="Olsen J.V."/>
            <person name="Vertegaal A.C."/>
        </authorList>
    </citation>
    <scope>SUMOYLATION [LARGE SCALE ANALYSIS] AT LYS-4; LYS-36 AND LYS-240</scope>
    <scope>IDENTIFICATION BY MASS SPECTROMETRY [LARGE SCALE ANALYSIS]</scope>
</reference>
<reference key="15">
    <citation type="journal article" date="2015" name="Mol. Cell. Proteomics">
        <title>System-wide analysis of SUMOylation dynamics in response to replication stress reveals novel small ubiquitin-like modified target proteins and acceptor lysines relevant for genome stability.</title>
        <authorList>
            <person name="Xiao Z."/>
            <person name="Chang J.G."/>
            <person name="Hendriks I.A."/>
            <person name="Sigurdsson J.O."/>
            <person name="Olsen J.V."/>
            <person name="Vertegaal A.C."/>
        </authorList>
    </citation>
    <scope>SUMOYLATION [LARGE SCALE ANALYSIS] AT LYS-240</scope>
    <scope>IDENTIFICATION BY MASS SPECTROMETRY [LARGE SCALE ANALYSIS]</scope>
</reference>
<reference key="16">
    <citation type="journal article" date="2017" name="Nat. Struct. Mol. Biol.">
        <title>Site-specific mapping of the human SUMO proteome reveals co-modification with phosphorylation.</title>
        <authorList>
            <person name="Hendriks I.A."/>
            <person name="Lyon D."/>
            <person name="Young C."/>
            <person name="Jensen L.J."/>
            <person name="Vertegaal A.C."/>
            <person name="Nielsen M.L."/>
        </authorList>
    </citation>
    <scope>SUMOYLATION [LARGE SCALE ANALYSIS] AT LYS-4; LYS-33; LYS-36; LYS-81; LYS-141; LYS-240 AND LYS-343</scope>
    <scope>IDENTIFICATION BY MASS SPECTROMETRY [LARGE SCALE ANALYSIS]</scope>
</reference>
<evidence type="ECO:0000250" key="1">
    <source>
        <dbReference type="UniProtKB" id="P09450"/>
    </source>
</evidence>
<evidence type="ECO:0000255" key="2">
    <source>
        <dbReference type="PROSITE-ProRule" id="PRU00978"/>
    </source>
</evidence>
<evidence type="ECO:0000256" key="3">
    <source>
        <dbReference type="SAM" id="MobiDB-lite"/>
    </source>
</evidence>
<evidence type="ECO:0000269" key="4">
    <source>
    </source>
</evidence>
<evidence type="ECO:0000269" key="5">
    <source ref="4"/>
</evidence>
<evidence type="ECO:0000305" key="6"/>
<evidence type="ECO:0007744" key="7">
    <source>
    </source>
</evidence>
<evidence type="ECO:0007744" key="8">
    <source>
    </source>
</evidence>
<evidence type="ECO:0007744" key="9">
    <source>
    </source>
</evidence>
<evidence type="ECO:0007744" key="10">
    <source>
    </source>
</evidence>
<evidence type="ECO:0007744" key="11">
    <source>
    </source>
</evidence>
<evidence type="ECO:0007744" key="12">
    <source>
    </source>
</evidence>
<evidence type="ECO:0007744" key="13">
    <source>
    </source>
</evidence>
<evidence type="ECO:0007744" key="14">
    <source>
    </source>
</evidence>
<evidence type="ECO:0007744" key="15">
    <source>
    </source>
</evidence>
<evidence type="ECO:0007744" key="16">
    <source>
    </source>
</evidence>
<sequence length="347" mass="35879">MCTKMEQPFYHDDSYTATGYGRAPGGLSLHDYKLLKPSLAVNLADPYRSLKAPGARGPGPEGGGGGSYFSGQGSDTGASLKLASSELERLIVPNSNGVITTTPTPPGQYFYPRGGGSGGGAGGAGGGVTEEQEGFADGFVKALDDLHKMNHVTPPNVSLGATGGPPAGPGGVYAGPEPPPVYTNLSSYSPASASSGGAGAAVGTGSSYPTTTISYLPHAPPFAGGHPAQLGLGRGASTFKEEPQTVPEARSRDATPPVSPINMEDQERIKVERKRLRNRLAATKCRKRKLERIARLEDKVKTLKAENAGLSSTAGLLREQVAQLKQKVMTHVSNGCQLLLGVKGHAF</sequence>
<protein>
    <recommendedName>
        <fullName evidence="6">Transcription factor JunB</fullName>
    </recommendedName>
    <alternativeName>
        <fullName evidence="6">Transcription factor AP-1 subunit JunB</fullName>
    </alternativeName>
</protein>
<feature type="chain" id="PRO_0000076438" description="Transcription factor JunB">
    <location>
        <begin position="1"/>
        <end position="347"/>
    </location>
</feature>
<feature type="domain" description="bZIP" evidence="2">
    <location>
        <begin position="268"/>
        <end position="331"/>
    </location>
</feature>
<feature type="region of interest" description="Disordered" evidence="3">
    <location>
        <begin position="51"/>
        <end position="73"/>
    </location>
</feature>
<feature type="region of interest" description="Disordered" evidence="3">
    <location>
        <begin position="239"/>
        <end position="260"/>
    </location>
</feature>
<feature type="region of interest" description="Basic motif" evidence="2">
    <location>
        <begin position="268"/>
        <end position="295"/>
    </location>
</feature>
<feature type="region of interest" description="Leucine-zipper" evidence="2">
    <location>
        <begin position="296"/>
        <end position="324"/>
    </location>
</feature>
<feature type="compositionally biased region" description="Gly residues" evidence="3">
    <location>
        <begin position="56"/>
        <end position="68"/>
    </location>
</feature>
<feature type="compositionally biased region" description="Basic and acidic residues" evidence="3">
    <location>
        <begin position="239"/>
        <end position="253"/>
    </location>
</feature>
<feature type="modified residue" description="Phosphothreonine" evidence="7">
    <location>
        <position position="102"/>
    </location>
</feature>
<feature type="modified residue" description="Phosphothreonine" evidence="7 9">
    <location>
        <position position="104"/>
    </location>
</feature>
<feature type="modified residue" description="Phosphoserine" evidence="7 9 11">
    <location>
        <position position="117"/>
    </location>
</feature>
<feature type="modified residue" description="N6-acetyllysine; alternate" evidence="1">
    <location>
        <position position="240"/>
    </location>
</feature>
<feature type="modified residue" description="Phosphoserine" evidence="8 9">
    <location>
        <position position="251"/>
    </location>
</feature>
<feature type="modified residue" description="Phosphothreonine" evidence="8 9 10 11">
    <location>
        <position position="255"/>
    </location>
</feature>
<feature type="modified residue" description="Phosphoserine" evidence="8 10 11">
    <location>
        <position position="259"/>
    </location>
</feature>
<feature type="cross-link" description="Glycyl lysine isopeptide (Lys-Gly) (interchain with G-Cter in SUMO2)" evidence="13 15 16">
    <location>
        <position position="4"/>
    </location>
</feature>
<feature type="cross-link" description="Glycyl lysine isopeptide (Lys-Gly) (interchain with G-Cter in SUMO2)" evidence="13 16">
    <location>
        <position position="33"/>
    </location>
</feature>
<feature type="cross-link" description="Glycyl lysine isopeptide (Lys-Gly) (interchain with G-Cter in SUMO2)" evidence="15 16">
    <location>
        <position position="36"/>
    </location>
</feature>
<feature type="cross-link" description="Glycyl lysine isopeptide (Lys-Gly) (interchain with G-Cter in SUMO2)" evidence="16">
    <location>
        <position position="81"/>
    </location>
</feature>
<feature type="cross-link" description="Glycyl lysine isopeptide (Lys-Gly) (interchain with G-Cter in SUMO2)" evidence="16">
    <location>
        <position position="141"/>
    </location>
</feature>
<feature type="cross-link" description="Glycyl lysine isopeptide (Lys-Gly) (interchain with G-Cter in SUMO1); alternate" evidence="12">
    <location>
        <position position="240"/>
    </location>
</feature>
<feature type="cross-link" description="Glycyl lysine isopeptide (Lys-Gly) (interchain with G-Cter in SUMO2); alternate" evidence="12 13 14 15 16">
    <location>
        <position position="240"/>
    </location>
</feature>
<feature type="cross-link" description="Glycyl lysine isopeptide (Lys-Gly) (interchain with G-Cter in SUMO2)" evidence="16">
    <location>
        <position position="343"/>
    </location>
</feature>
<feature type="sequence variant" id="VAR_021081" description="In dbSNP:rs17880705." evidence="5">
    <original>L</original>
    <variation>V</variation>
    <location>
        <position position="230"/>
    </location>
</feature>
<feature type="sequence conflict" description="In Ref. 5; AAH09465." evidence="6" ref="5">
    <original>A</original>
    <variation>G</variation>
    <location>
        <position position="124"/>
    </location>
</feature>
<accession>P17275</accession>
<accession>Q96GH3</accession>